<accession>B2SVN5</accession>
<evidence type="ECO:0000255" key="1">
    <source>
        <dbReference type="HAMAP-Rule" id="MF_00131"/>
    </source>
</evidence>
<feature type="chain" id="PRO_1000095762" description="Tryptophan synthase alpha chain">
    <location>
        <begin position="1"/>
        <end position="268"/>
    </location>
</feature>
<feature type="active site" description="Proton acceptor" evidence="1">
    <location>
        <position position="49"/>
    </location>
</feature>
<feature type="active site" description="Proton acceptor" evidence="1">
    <location>
        <position position="60"/>
    </location>
</feature>
<dbReference type="EC" id="4.2.1.20" evidence="1"/>
<dbReference type="EMBL" id="CP000967">
    <property type="protein sequence ID" value="ACD60109.1"/>
    <property type="molecule type" value="Genomic_DNA"/>
</dbReference>
<dbReference type="RefSeq" id="WP_012445542.1">
    <property type="nucleotide sequence ID" value="NC_010717.2"/>
</dbReference>
<dbReference type="SMR" id="B2SVN5"/>
<dbReference type="KEGG" id="xop:PXO_01272"/>
<dbReference type="eggNOG" id="COG0159">
    <property type="taxonomic scope" value="Bacteria"/>
</dbReference>
<dbReference type="HOGENOM" id="CLU_016734_0_0_6"/>
<dbReference type="UniPathway" id="UPA00035">
    <property type="reaction ID" value="UER00044"/>
</dbReference>
<dbReference type="Proteomes" id="UP000001740">
    <property type="component" value="Chromosome"/>
</dbReference>
<dbReference type="GO" id="GO:0005829">
    <property type="term" value="C:cytosol"/>
    <property type="evidence" value="ECO:0007669"/>
    <property type="project" value="TreeGrafter"/>
</dbReference>
<dbReference type="GO" id="GO:0004834">
    <property type="term" value="F:tryptophan synthase activity"/>
    <property type="evidence" value="ECO:0007669"/>
    <property type="project" value="UniProtKB-UniRule"/>
</dbReference>
<dbReference type="CDD" id="cd04724">
    <property type="entry name" value="Tryptophan_synthase_alpha"/>
    <property type="match status" value="1"/>
</dbReference>
<dbReference type="FunFam" id="3.20.20.70:FF:000037">
    <property type="entry name" value="Tryptophan synthase alpha chain"/>
    <property type="match status" value="1"/>
</dbReference>
<dbReference type="Gene3D" id="3.20.20.70">
    <property type="entry name" value="Aldolase class I"/>
    <property type="match status" value="1"/>
</dbReference>
<dbReference type="HAMAP" id="MF_00131">
    <property type="entry name" value="Trp_synth_alpha"/>
    <property type="match status" value="1"/>
</dbReference>
<dbReference type="InterPro" id="IPR013785">
    <property type="entry name" value="Aldolase_TIM"/>
</dbReference>
<dbReference type="InterPro" id="IPR011060">
    <property type="entry name" value="RibuloseP-bd_barrel"/>
</dbReference>
<dbReference type="InterPro" id="IPR018204">
    <property type="entry name" value="Trp_synthase_alpha_AS"/>
</dbReference>
<dbReference type="InterPro" id="IPR002028">
    <property type="entry name" value="Trp_synthase_suA"/>
</dbReference>
<dbReference type="NCBIfam" id="TIGR00262">
    <property type="entry name" value="trpA"/>
    <property type="match status" value="1"/>
</dbReference>
<dbReference type="PANTHER" id="PTHR43406:SF1">
    <property type="entry name" value="TRYPTOPHAN SYNTHASE ALPHA CHAIN, CHLOROPLASTIC"/>
    <property type="match status" value="1"/>
</dbReference>
<dbReference type="PANTHER" id="PTHR43406">
    <property type="entry name" value="TRYPTOPHAN SYNTHASE, ALPHA CHAIN"/>
    <property type="match status" value="1"/>
</dbReference>
<dbReference type="Pfam" id="PF00290">
    <property type="entry name" value="Trp_syntA"/>
    <property type="match status" value="1"/>
</dbReference>
<dbReference type="SUPFAM" id="SSF51366">
    <property type="entry name" value="Ribulose-phoshate binding barrel"/>
    <property type="match status" value="1"/>
</dbReference>
<dbReference type="PROSITE" id="PS00167">
    <property type="entry name" value="TRP_SYNTHASE_ALPHA"/>
    <property type="match status" value="1"/>
</dbReference>
<protein>
    <recommendedName>
        <fullName evidence="1">Tryptophan synthase alpha chain</fullName>
        <ecNumber evidence="1">4.2.1.20</ecNumber>
    </recommendedName>
</protein>
<organism>
    <name type="scientific">Xanthomonas oryzae pv. oryzae (strain PXO99A)</name>
    <dbReference type="NCBI Taxonomy" id="360094"/>
    <lineage>
        <taxon>Bacteria</taxon>
        <taxon>Pseudomonadati</taxon>
        <taxon>Pseudomonadota</taxon>
        <taxon>Gammaproteobacteria</taxon>
        <taxon>Lysobacterales</taxon>
        <taxon>Lysobacteraceae</taxon>
        <taxon>Xanthomonas</taxon>
    </lineage>
</organism>
<sequence length="268" mass="28249">MRRIDFRFAELRANGRKALIPFITAGDPSLEATVPVMHALVRAGADVIELGVPFSDPMADGPTIQRSSERALGRGAGLAYVLEAVHEFRREDAATPVVLMGYLNPIEIHGTRRFAEAAVAAGVDGLLLVDLPPEEADETRAIFTEVGLALIALASPTTSEQRLDMLCSTAQGYLYYVSFAGVTGASNLLDTYAASDRLRQLRQRAGAPVVAGFGIKDAASAAAMAVDADGVVVGSALVAALAEADDVRSARERAEAFLAPLRQALDQA</sequence>
<comment type="function">
    <text evidence="1">The alpha subunit is responsible for the aldol cleavage of indoleglycerol phosphate to indole and glyceraldehyde 3-phosphate.</text>
</comment>
<comment type="catalytic activity">
    <reaction evidence="1">
        <text>(1S,2R)-1-C-(indol-3-yl)glycerol 3-phosphate + L-serine = D-glyceraldehyde 3-phosphate + L-tryptophan + H2O</text>
        <dbReference type="Rhea" id="RHEA:10532"/>
        <dbReference type="ChEBI" id="CHEBI:15377"/>
        <dbReference type="ChEBI" id="CHEBI:33384"/>
        <dbReference type="ChEBI" id="CHEBI:57912"/>
        <dbReference type="ChEBI" id="CHEBI:58866"/>
        <dbReference type="ChEBI" id="CHEBI:59776"/>
        <dbReference type="EC" id="4.2.1.20"/>
    </reaction>
</comment>
<comment type="pathway">
    <text evidence="1">Amino-acid biosynthesis; L-tryptophan biosynthesis; L-tryptophan from chorismate: step 5/5.</text>
</comment>
<comment type="subunit">
    <text evidence="1">Tetramer of two alpha and two beta chains.</text>
</comment>
<comment type="similarity">
    <text evidence="1">Belongs to the TrpA family.</text>
</comment>
<reference key="1">
    <citation type="journal article" date="2008" name="BMC Genomics">
        <title>Genome sequence and rapid evolution of the rice pathogen Xanthomonas oryzae pv. oryzae PXO99A.</title>
        <authorList>
            <person name="Salzberg S.L."/>
            <person name="Sommer D.D."/>
            <person name="Schatz M.C."/>
            <person name="Phillippy A.M."/>
            <person name="Rabinowicz P.D."/>
            <person name="Tsuge S."/>
            <person name="Furutani A."/>
            <person name="Ochiai H."/>
            <person name="Delcher A.L."/>
            <person name="Kelley D."/>
            <person name="Madupu R."/>
            <person name="Puiu D."/>
            <person name="Radune D."/>
            <person name="Shumway M."/>
            <person name="Trapnell C."/>
            <person name="Aparna G."/>
            <person name="Jha G."/>
            <person name="Pandey A."/>
            <person name="Patil P.B."/>
            <person name="Ishihara H."/>
            <person name="Meyer D.F."/>
            <person name="Szurek B."/>
            <person name="Verdier V."/>
            <person name="Koebnik R."/>
            <person name="Dow J.M."/>
            <person name="Ryan R.P."/>
            <person name="Hirata H."/>
            <person name="Tsuyumu S."/>
            <person name="Won Lee S."/>
            <person name="Seo Y.-S."/>
            <person name="Sriariyanum M."/>
            <person name="Ronald P.C."/>
            <person name="Sonti R.V."/>
            <person name="Van Sluys M.-A."/>
            <person name="Leach J.E."/>
            <person name="White F.F."/>
            <person name="Bogdanove A.J."/>
        </authorList>
    </citation>
    <scope>NUCLEOTIDE SEQUENCE [LARGE SCALE GENOMIC DNA]</scope>
    <source>
        <strain>PXO99A</strain>
    </source>
</reference>
<gene>
    <name evidence="1" type="primary">trpA</name>
    <name type="ordered locus">PXO_01272</name>
</gene>
<keyword id="KW-0028">Amino-acid biosynthesis</keyword>
<keyword id="KW-0057">Aromatic amino acid biosynthesis</keyword>
<keyword id="KW-0456">Lyase</keyword>
<keyword id="KW-0822">Tryptophan biosynthesis</keyword>
<name>TRPA_XANOP</name>
<proteinExistence type="inferred from homology"/>